<reference key="1">
    <citation type="journal article" date="2003" name="Proc. Natl. Acad. Sci. U.S.A.">
        <title>The complete genome sequence of the Arabidopsis and tomato pathogen Pseudomonas syringae pv. tomato DC3000.</title>
        <authorList>
            <person name="Buell C.R."/>
            <person name="Joardar V."/>
            <person name="Lindeberg M."/>
            <person name="Selengut J."/>
            <person name="Paulsen I.T."/>
            <person name="Gwinn M.L."/>
            <person name="Dodson R.J."/>
            <person name="DeBoy R.T."/>
            <person name="Durkin A.S."/>
            <person name="Kolonay J.F."/>
            <person name="Madupu R."/>
            <person name="Daugherty S.C."/>
            <person name="Brinkac L.M."/>
            <person name="Beanan M.J."/>
            <person name="Haft D.H."/>
            <person name="Nelson W.C."/>
            <person name="Davidsen T.M."/>
            <person name="Zafar N."/>
            <person name="Zhou L."/>
            <person name="Liu J."/>
            <person name="Yuan Q."/>
            <person name="Khouri H.M."/>
            <person name="Fedorova N.B."/>
            <person name="Tran B."/>
            <person name="Russell D."/>
            <person name="Berry K.J."/>
            <person name="Utterback T.R."/>
            <person name="Van Aken S.E."/>
            <person name="Feldblyum T.V."/>
            <person name="D'Ascenzo M."/>
            <person name="Deng W.-L."/>
            <person name="Ramos A.R."/>
            <person name="Alfano J.R."/>
            <person name="Cartinhour S."/>
            <person name="Chatterjee A.K."/>
            <person name="Delaney T.P."/>
            <person name="Lazarowitz S.G."/>
            <person name="Martin G.B."/>
            <person name="Schneider D.J."/>
            <person name="Tang X."/>
            <person name="Bender C.L."/>
            <person name="White O."/>
            <person name="Fraser C.M."/>
            <person name="Collmer A."/>
        </authorList>
    </citation>
    <scope>NUCLEOTIDE SEQUENCE [LARGE SCALE GENOMIC DNA]</scope>
    <source>
        <strain>ATCC BAA-871 / DC3000</strain>
    </source>
</reference>
<name>RSMJ_PSESM</name>
<proteinExistence type="inferred from homology"/>
<feature type="chain" id="PRO_0000212086" description="Ribosomal RNA small subunit methyltransferase J">
    <location>
        <begin position="1"/>
        <end position="269"/>
    </location>
</feature>
<feature type="binding site" evidence="1">
    <location>
        <begin position="125"/>
        <end position="126"/>
    </location>
    <ligand>
        <name>S-adenosyl-L-methionine</name>
        <dbReference type="ChEBI" id="CHEBI:59789"/>
    </ligand>
</feature>
<feature type="binding site" evidence="1">
    <location>
        <position position="179"/>
    </location>
    <ligand>
        <name>S-adenosyl-L-methionine</name>
        <dbReference type="ChEBI" id="CHEBI:59789"/>
    </ligand>
</feature>
<sequence length="269" mass="29091">MIEQQAGSRIRVEALAIDGQEHAAQWAQRLGLPLHDADADFALQLTDDGLQLQQLGDDVPGAVRVDFVEGAVAHRRLFGGGTGQMIAKAVGIQPGIRPSVLDATAGLGKDAFVLASLGCEMSLIERQPIIAALLEDGLARGRGDRDIGPIIARMRLLTGNSIEIIRSWVEEPPQVIYLDPMFPHREKTALVKKEMRLFRPLVGDDMDAPALLAAALALATHRVVVKRPRKAPCIDGPKPGYALDGKSSRYDIYPRKALKPKAVEPAPDL</sequence>
<organism>
    <name type="scientific">Pseudomonas syringae pv. tomato (strain ATCC BAA-871 / DC3000)</name>
    <dbReference type="NCBI Taxonomy" id="223283"/>
    <lineage>
        <taxon>Bacteria</taxon>
        <taxon>Pseudomonadati</taxon>
        <taxon>Pseudomonadota</taxon>
        <taxon>Gammaproteobacteria</taxon>
        <taxon>Pseudomonadales</taxon>
        <taxon>Pseudomonadaceae</taxon>
        <taxon>Pseudomonas</taxon>
    </lineage>
</organism>
<keyword id="KW-0963">Cytoplasm</keyword>
<keyword id="KW-0489">Methyltransferase</keyword>
<keyword id="KW-1185">Reference proteome</keyword>
<keyword id="KW-0698">rRNA processing</keyword>
<keyword id="KW-0949">S-adenosyl-L-methionine</keyword>
<keyword id="KW-0808">Transferase</keyword>
<gene>
    <name evidence="1" type="primary">rsmJ</name>
    <name type="ordered locus">PSPTO_1515</name>
</gene>
<protein>
    <recommendedName>
        <fullName evidence="1">Ribosomal RNA small subunit methyltransferase J</fullName>
        <ecNumber evidence="1">2.1.1.242</ecNumber>
    </recommendedName>
    <alternativeName>
        <fullName evidence="1">16S rRNA m2G1516 methyltransferase</fullName>
    </alternativeName>
    <alternativeName>
        <fullName evidence="1">rRNA (guanine-N(2)-)-methyltransferase</fullName>
    </alternativeName>
</protein>
<accession>Q886R2</accession>
<comment type="function">
    <text evidence="1">Specifically methylates the guanosine in position 1516 of 16S rRNA.</text>
</comment>
<comment type="catalytic activity">
    <reaction evidence="1">
        <text>guanosine(1516) in 16S rRNA + S-adenosyl-L-methionine = N(2)-methylguanosine(1516) in 16S rRNA + S-adenosyl-L-homocysteine + H(+)</text>
        <dbReference type="Rhea" id="RHEA:43220"/>
        <dbReference type="Rhea" id="RHEA-COMP:10412"/>
        <dbReference type="Rhea" id="RHEA-COMP:10413"/>
        <dbReference type="ChEBI" id="CHEBI:15378"/>
        <dbReference type="ChEBI" id="CHEBI:57856"/>
        <dbReference type="ChEBI" id="CHEBI:59789"/>
        <dbReference type="ChEBI" id="CHEBI:74269"/>
        <dbReference type="ChEBI" id="CHEBI:74481"/>
        <dbReference type="EC" id="2.1.1.242"/>
    </reaction>
</comment>
<comment type="subcellular location">
    <subcellularLocation>
        <location evidence="1">Cytoplasm</location>
    </subcellularLocation>
</comment>
<comment type="similarity">
    <text evidence="1">Belongs to the methyltransferase superfamily. RsmJ family.</text>
</comment>
<comment type="sequence caution" evidence="2">
    <conflict type="erroneous initiation">
        <sequence resource="EMBL-CDS" id="AAO55035"/>
    </conflict>
    <text>Extended N-terminus.</text>
</comment>
<evidence type="ECO:0000255" key="1">
    <source>
        <dbReference type="HAMAP-Rule" id="MF_01523"/>
    </source>
</evidence>
<evidence type="ECO:0000305" key="2"/>
<dbReference type="EC" id="2.1.1.242" evidence="1"/>
<dbReference type="EMBL" id="AE016853">
    <property type="protein sequence ID" value="AAO55035.1"/>
    <property type="status" value="ALT_INIT"/>
    <property type="molecule type" value="Genomic_DNA"/>
</dbReference>
<dbReference type="RefSeq" id="NP_791340.1">
    <property type="nucleotide sequence ID" value="NC_004578.1"/>
</dbReference>
<dbReference type="RefSeq" id="WP_005765943.1">
    <property type="nucleotide sequence ID" value="NC_004578.1"/>
</dbReference>
<dbReference type="SMR" id="Q886R2"/>
<dbReference type="STRING" id="223283.PSPTO_1515"/>
<dbReference type="GeneID" id="1183152"/>
<dbReference type="KEGG" id="pst:PSPTO_1515"/>
<dbReference type="PATRIC" id="fig|223283.9.peg.1538"/>
<dbReference type="eggNOG" id="COG0742">
    <property type="taxonomic scope" value="Bacteria"/>
</dbReference>
<dbReference type="HOGENOM" id="CLU_076324_0_1_6"/>
<dbReference type="OrthoDB" id="3191794at2"/>
<dbReference type="Proteomes" id="UP000002515">
    <property type="component" value="Chromosome"/>
</dbReference>
<dbReference type="GO" id="GO:0005737">
    <property type="term" value="C:cytoplasm"/>
    <property type="evidence" value="ECO:0007669"/>
    <property type="project" value="UniProtKB-SubCell"/>
</dbReference>
<dbReference type="GO" id="GO:0008990">
    <property type="term" value="F:rRNA (guanine-N2-)-methyltransferase activity"/>
    <property type="evidence" value="ECO:0007669"/>
    <property type="project" value="UniProtKB-UniRule"/>
</dbReference>
<dbReference type="Gene3D" id="3.40.50.150">
    <property type="entry name" value="Vaccinia Virus protein VP39"/>
    <property type="match status" value="1"/>
</dbReference>
<dbReference type="HAMAP" id="MF_01523">
    <property type="entry name" value="16SrRNA_methyltr_J"/>
    <property type="match status" value="1"/>
</dbReference>
<dbReference type="InterPro" id="IPR007536">
    <property type="entry name" value="16SrRNA_methylTrfase_J"/>
</dbReference>
<dbReference type="InterPro" id="IPR029063">
    <property type="entry name" value="SAM-dependent_MTases_sf"/>
</dbReference>
<dbReference type="PANTHER" id="PTHR36112">
    <property type="entry name" value="RIBOSOMAL RNA SMALL SUBUNIT METHYLTRANSFERASE J"/>
    <property type="match status" value="1"/>
</dbReference>
<dbReference type="PANTHER" id="PTHR36112:SF1">
    <property type="entry name" value="RIBOSOMAL RNA SMALL SUBUNIT METHYLTRANSFERASE J"/>
    <property type="match status" value="1"/>
</dbReference>
<dbReference type="Pfam" id="PF04445">
    <property type="entry name" value="SAM_MT"/>
    <property type="match status" value="1"/>
</dbReference>
<dbReference type="SUPFAM" id="SSF53335">
    <property type="entry name" value="S-adenosyl-L-methionine-dependent methyltransferases"/>
    <property type="match status" value="1"/>
</dbReference>